<feature type="chain" id="PRO_0000182583" description="Flagellin">
    <location>
        <begin position="1"/>
        <end position="518"/>
    </location>
</feature>
<feature type="helix" evidence="2">
    <location>
        <begin position="478"/>
        <end position="496"/>
    </location>
</feature>
<feature type="helix" evidence="2">
    <location>
        <begin position="498"/>
        <end position="505"/>
    </location>
</feature>
<feature type="helix" evidence="2">
    <location>
        <begin position="510"/>
        <end position="518"/>
    </location>
</feature>
<proteinExistence type="evidence at protein level"/>
<comment type="function">
    <text>Flagellin is the subunit protein which polymerizes to form the filaments of bacterial flagella.</text>
</comment>
<comment type="subcellular location">
    <subcellularLocation>
        <location>Secreted</location>
    </subcellularLocation>
    <subcellularLocation>
        <location>Bacterial flagellum</location>
    </subcellularLocation>
</comment>
<comment type="similarity">
    <text evidence="1">Belongs to the bacterial flagellin family.</text>
</comment>
<accession>O67803</accession>
<reference key="1">
    <citation type="journal article" date="1998" name="Nature">
        <title>The complete genome of the hyperthermophilic bacterium Aquifex aeolicus.</title>
        <authorList>
            <person name="Deckert G."/>
            <person name="Warren P.V."/>
            <person name="Gaasterland T."/>
            <person name="Young W.G."/>
            <person name="Lenox A.L."/>
            <person name="Graham D.E."/>
            <person name="Overbeek R."/>
            <person name="Snead M.A."/>
            <person name="Keller M."/>
            <person name="Aujay M."/>
            <person name="Huber R."/>
            <person name="Feldman R.A."/>
            <person name="Short J.M."/>
            <person name="Olsen G.J."/>
            <person name="Swanson R.V."/>
        </authorList>
    </citation>
    <scope>NUCLEOTIDE SEQUENCE [LARGE SCALE GENOMIC DNA]</scope>
    <source>
        <strain>VF5</strain>
    </source>
</reference>
<organism>
    <name type="scientific">Aquifex aeolicus (strain VF5)</name>
    <dbReference type="NCBI Taxonomy" id="224324"/>
    <lineage>
        <taxon>Bacteria</taxon>
        <taxon>Pseudomonadati</taxon>
        <taxon>Aquificota</taxon>
        <taxon>Aquificia</taxon>
        <taxon>Aquificales</taxon>
        <taxon>Aquificaceae</taxon>
        <taxon>Aquifex</taxon>
    </lineage>
</organism>
<dbReference type="EMBL" id="AE000657">
    <property type="protein sequence ID" value="AAC07764.1"/>
    <property type="molecule type" value="Genomic_DNA"/>
</dbReference>
<dbReference type="PIR" id="G70471">
    <property type="entry name" value="G70471"/>
</dbReference>
<dbReference type="RefSeq" id="NP_214372.1">
    <property type="nucleotide sequence ID" value="NC_000918.1"/>
</dbReference>
<dbReference type="RefSeq" id="WP_010881308.1">
    <property type="nucleotide sequence ID" value="NC_000918.1"/>
</dbReference>
<dbReference type="PDB" id="1ORY">
    <property type="method" value="X-ray"/>
    <property type="resolution" value="2.45 A"/>
    <property type="chains" value="B=464-518"/>
</dbReference>
<dbReference type="PDB" id="4IWB">
    <property type="method" value="X-ray"/>
    <property type="resolution" value="1.75 A"/>
    <property type="chains" value="A/B=478-518"/>
</dbReference>
<dbReference type="PDBsum" id="1ORY"/>
<dbReference type="PDBsum" id="4IWB"/>
<dbReference type="SMR" id="O67803"/>
<dbReference type="FunCoup" id="O67803">
    <property type="interactions" value="83"/>
</dbReference>
<dbReference type="IntAct" id="O67803">
    <property type="interactions" value="1"/>
</dbReference>
<dbReference type="STRING" id="224324.aq_1998"/>
<dbReference type="EnsemblBacteria" id="AAC07764">
    <property type="protein sequence ID" value="AAC07764"/>
    <property type="gene ID" value="aq_1998"/>
</dbReference>
<dbReference type="KEGG" id="aae:aq_1998"/>
<dbReference type="PATRIC" id="fig|224324.8.peg.1545"/>
<dbReference type="eggNOG" id="COG1344">
    <property type="taxonomic scope" value="Bacteria"/>
</dbReference>
<dbReference type="HOGENOM" id="CLU_011142_7_1_0"/>
<dbReference type="InParanoid" id="O67803"/>
<dbReference type="OrthoDB" id="9796789at2"/>
<dbReference type="EvolutionaryTrace" id="O67803"/>
<dbReference type="Proteomes" id="UP000000798">
    <property type="component" value="Chromosome"/>
</dbReference>
<dbReference type="GO" id="GO:0009288">
    <property type="term" value="C:bacterial-type flagellum"/>
    <property type="evidence" value="ECO:0007669"/>
    <property type="project" value="UniProtKB-SubCell"/>
</dbReference>
<dbReference type="GO" id="GO:0005576">
    <property type="term" value="C:extracellular region"/>
    <property type="evidence" value="ECO:0007669"/>
    <property type="project" value="UniProtKB-SubCell"/>
</dbReference>
<dbReference type="GO" id="GO:0005198">
    <property type="term" value="F:structural molecule activity"/>
    <property type="evidence" value="ECO:0007669"/>
    <property type="project" value="InterPro"/>
</dbReference>
<dbReference type="Gene3D" id="3.30.70.2120">
    <property type="match status" value="1"/>
</dbReference>
<dbReference type="Gene3D" id="1.20.1330.10">
    <property type="entry name" value="f41 fragment of flagellin, N-terminal domain"/>
    <property type="match status" value="1"/>
</dbReference>
<dbReference type="Gene3D" id="6.10.10.10">
    <property type="entry name" value="Flagellar export chaperone, C-terminal domain"/>
    <property type="match status" value="1"/>
</dbReference>
<dbReference type="InterPro" id="IPR001492">
    <property type="entry name" value="Flagellin"/>
</dbReference>
<dbReference type="InterPro" id="IPR046358">
    <property type="entry name" value="Flagellin_C"/>
</dbReference>
<dbReference type="InterPro" id="IPR042187">
    <property type="entry name" value="Flagellin_C_sub2"/>
</dbReference>
<dbReference type="InterPro" id="IPR001029">
    <property type="entry name" value="Flagellin_N"/>
</dbReference>
<dbReference type="PANTHER" id="PTHR42792">
    <property type="entry name" value="FLAGELLIN"/>
    <property type="match status" value="1"/>
</dbReference>
<dbReference type="PANTHER" id="PTHR42792:SF2">
    <property type="entry name" value="FLAGELLIN"/>
    <property type="match status" value="1"/>
</dbReference>
<dbReference type="Pfam" id="PF00700">
    <property type="entry name" value="Flagellin_C"/>
    <property type="match status" value="1"/>
</dbReference>
<dbReference type="Pfam" id="PF00669">
    <property type="entry name" value="Flagellin_N"/>
    <property type="match status" value="1"/>
</dbReference>
<dbReference type="PRINTS" id="PR00207">
    <property type="entry name" value="FLAGELLIN"/>
</dbReference>
<dbReference type="SUPFAM" id="SSF64518">
    <property type="entry name" value="Phase 1 flagellin"/>
    <property type="match status" value="1"/>
</dbReference>
<keyword id="KW-0002">3D-structure</keyword>
<keyword id="KW-0975">Bacterial flagellum</keyword>
<keyword id="KW-1185">Reference proteome</keyword>
<keyword id="KW-0964">Secreted</keyword>
<protein>
    <recommendedName>
        <fullName>Flagellin</fullName>
    </recommendedName>
</protein>
<gene>
    <name type="primary">flaA</name>
    <name type="synonym">fliC</name>
    <name type="ordered locus">aq_1998</name>
</gene>
<evidence type="ECO:0000305" key="1"/>
<evidence type="ECO:0007829" key="2">
    <source>
        <dbReference type="PDB" id="4IWB"/>
    </source>
</evidence>
<sequence length="518" mass="55177">MATRINYNYEAAVTYTSLKQNERLMNKSLLRLSTGLRILSAADDASGLFIADQLALVSAGLEQGNRNIQFGISALQIAEGGVSQIYDKLKTMYQKAVSAANDINDPNARAALQRDIENLRDAILKIAQDTEYNGIRLLNGSFNNVRIHYGARSAQTLSVSISSVLPQQLGGYVAEDSPATATDTNNVLTNIGTTNTNYSVASGDSLAFTFTDGTSITFNSLNQLGYDFNNTGTYILDASAIVNTINNNPTLQGKGIRAYAENVSEADLTFDTTNVNIDQGDEVTITFYSGGELVFTKTYTDTVTLDQFIADINNQAGGKLIASKDPSGTKLVLSTPNGETISVEVTVNDADGDTVVSSINLGALLQGAAGTVVNTSGATASAVKVGTLIVMGSENFTVQGTGIAYFTAATSGTFNSLNDVDVTTNKGAEIAQVLIQRAVRQVDTIRTQIGSTINNLQAIYDAQAVAKDNTDNAESIIRNVDFAKEMTEFTKYQIRMQSGVAMLAQANALPQLVLQLLR</sequence>
<name>FLAA_AQUAE</name>